<protein>
    <recommendedName>
        <fullName evidence="22 23">Phototropic-responsive NPH3 family protein NPY1</fullName>
    </recommendedName>
    <alternativeName>
        <fullName evidence="15">Protein ENHANCER OF PINOID</fullName>
    </alternativeName>
    <alternativeName>
        <fullName evidence="16 20">Protein MACCHI-BOU 4</fullName>
    </alternativeName>
    <alternativeName>
        <fullName evidence="17">Protein NAKED PINS IN YUC MUTANTS 1</fullName>
    </alternativeName>
</protein>
<keyword id="KW-1003">Cell membrane</keyword>
<keyword id="KW-0963">Cytoplasm</keyword>
<keyword id="KW-0967">Endosome</keyword>
<keyword id="KW-0472">Membrane</keyword>
<keyword id="KW-0597">Phosphoprotein</keyword>
<keyword id="KW-1185">Reference proteome</keyword>
<keyword id="KW-0833">Ubl conjugation pathway</keyword>
<sequence length="571" mass="64402">MKFMKLGSKPDTFESDGKFVKYAVSDLDSDVTIHVGEVTFHLHKFPLLSKSNRMQRLVFEASEEKTDEITILDMPGGYKAFEICAKFCYGMTVTLNAYNITAVRCAAEYLEMTEDADRGNLIYKIEVFLNSGIFRSWKDSIIVLQTTRSLLPWSEDLKLVGRCIDSVSAKILVNPETITWSYTFNRKLSGPDKIVEYHREKREENVIPKDWWVEDVCELEIDMFKRVISVVKSSGRMNNGVIAEALRYYVARWLPESMESLTSEASSNKDLVETVVFLLPKVNRAMSYSSCSFLLKLLKVSILVGADETVREDLVENVSLKLHEASVKDLLIHEVELVHRIVDQFMADEKRVSEDDRYKEFVLGNGILLSVGRLIDAYLALNSELTLSSFVELSELVPESARPIHDGLYKAIDTFMKEHPELTKSEKKRLCGLMDVRKLTNEASTHAAQNERLPLRVVVQVLYFEQLRANHSPVASVAASSHSPVEKTEENKGEEATKKVELSKKSRGSKSTRSGGGAQLMPSRSRRIFEKIWPGKGEISNKSSEVSSGSSQSPPAKSSSSSSRRRRHSIS</sequence>
<evidence type="ECO:0000250" key="1">
    <source>
        <dbReference type="UniProtKB" id="Q66GP0"/>
    </source>
</evidence>
<evidence type="ECO:0000250" key="2">
    <source>
        <dbReference type="UniProtKB" id="Q9FMF5"/>
    </source>
</evidence>
<evidence type="ECO:0000255" key="3">
    <source>
        <dbReference type="PROSITE-ProRule" id="PRU00037"/>
    </source>
</evidence>
<evidence type="ECO:0000255" key="4">
    <source>
        <dbReference type="PROSITE-ProRule" id="PRU00982"/>
    </source>
</evidence>
<evidence type="ECO:0000256" key="5">
    <source>
        <dbReference type="SAM" id="MobiDB-lite"/>
    </source>
</evidence>
<evidence type="ECO:0000269" key="6">
    <source>
    </source>
</evidence>
<evidence type="ECO:0000269" key="7">
    <source>
    </source>
</evidence>
<evidence type="ECO:0000269" key="8">
    <source>
    </source>
</evidence>
<evidence type="ECO:0000269" key="9">
    <source>
    </source>
</evidence>
<evidence type="ECO:0000269" key="10">
    <source>
    </source>
</evidence>
<evidence type="ECO:0000269" key="11">
    <source>
    </source>
</evidence>
<evidence type="ECO:0000269" key="12">
    <source>
    </source>
</evidence>
<evidence type="ECO:0000269" key="13">
    <source>
    </source>
</evidence>
<evidence type="ECO:0000269" key="14">
    <source>
    </source>
</evidence>
<evidence type="ECO:0000303" key="15">
    <source>
    </source>
</evidence>
<evidence type="ECO:0000303" key="16">
    <source>
    </source>
</evidence>
<evidence type="ECO:0000303" key="17">
    <source>
    </source>
</evidence>
<evidence type="ECO:0000303" key="18">
    <source>
    </source>
</evidence>
<evidence type="ECO:0000303" key="19">
    <source>
    </source>
</evidence>
<evidence type="ECO:0000303" key="20">
    <source>
    </source>
</evidence>
<evidence type="ECO:0000305" key="21"/>
<evidence type="ECO:0000305" key="22">
    <source>
    </source>
</evidence>
<evidence type="ECO:0000305" key="23">
    <source>
    </source>
</evidence>
<evidence type="ECO:0000312" key="24">
    <source>
        <dbReference type="Araport" id="AT4G31820"/>
    </source>
</evidence>
<evidence type="ECO:0000312" key="25">
    <source>
        <dbReference type="EMBL" id="CAB40752.1"/>
    </source>
</evidence>
<dbReference type="EMBL" id="AL049607">
    <property type="protein sequence ID" value="CAB40752.1"/>
    <property type="status" value="ALT_SEQ"/>
    <property type="molecule type" value="Genomic_DNA"/>
</dbReference>
<dbReference type="EMBL" id="AL161579">
    <property type="protein sequence ID" value="CAB79900.1"/>
    <property type="status" value="ALT_SEQ"/>
    <property type="molecule type" value="Genomic_DNA"/>
</dbReference>
<dbReference type="EMBL" id="CP002687">
    <property type="protein sequence ID" value="AEE85964.1"/>
    <property type="molecule type" value="Genomic_DNA"/>
</dbReference>
<dbReference type="EMBL" id="CP002687">
    <property type="protein sequence ID" value="ANM66057.1"/>
    <property type="status" value="ALT_SEQ"/>
    <property type="molecule type" value="Genomic_DNA"/>
</dbReference>
<dbReference type="EMBL" id="AY091021">
    <property type="protein sequence ID" value="AAM13843.1"/>
    <property type="molecule type" value="mRNA"/>
</dbReference>
<dbReference type="EMBL" id="AY150514">
    <property type="protein sequence ID" value="AAN13030.1"/>
    <property type="molecule type" value="mRNA"/>
</dbReference>
<dbReference type="PIR" id="T06304">
    <property type="entry name" value="T06304"/>
</dbReference>
<dbReference type="RefSeq" id="NP_001327983.1">
    <property type="nucleotide sequence ID" value="NM_001342117.1"/>
</dbReference>
<dbReference type="RefSeq" id="NP_194910.2">
    <property type="nucleotide sequence ID" value="NM_119332.4"/>
</dbReference>
<dbReference type="SMR" id="Q8H1D3"/>
<dbReference type="FunCoup" id="Q8H1D3">
    <property type="interactions" value="352"/>
</dbReference>
<dbReference type="STRING" id="3702.Q8H1D3"/>
<dbReference type="iPTMnet" id="Q8H1D3"/>
<dbReference type="PaxDb" id="3702-AT4G31820.1"/>
<dbReference type="ProteomicsDB" id="250548"/>
<dbReference type="EnsemblPlants" id="AT4G31820.1">
    <property type="protein sequence ID" value="AT4G31820.1"/>
    <property type="gene ID" value="AT4G31820"/>
</dbReference>
<dbReference type="EnsemblPlants" id="AT4G31820.2">
    <property type="protein sequence ID" value="AT4G31820.2"/>
    <property type="gene ID" value="AT4G31820"/>
</dbReference>
<dbReference type="GeneID" id="829311"/>
<dbReference type="Gramene" id="AT4G31820.1">
    <property type="protein sequence ID" value="AT4G31820.1"/>
    <property type="gene ID" value="AT4G31820"/>
</dbReference>
<dbReference type="Gramene" id="AT4G31820.2">
    <property type="protein sequence ID" value="AT4G31820.2"/>
    <property type="gene ID" value="AT4G31820"/>
</dbReference>
<dbReference type="KEGG" id="ath:AT4G31820"/>
<dbReference type="Araport" id="AT4G31820"/>
<dbReference type="TAIR" id="AT4G31820">
    <property type="gene designation" value="ENP"/>
</dbReference>
<dbReference type="eggNOG" id="ENOG502QQX7">
    <property type="taxonomic scope" value="Eukaryota"/>
</dbReference>
<dbReference type="HOGENOM" id="CLU_005994_5_2_1"/>
<dbReference type="InParanoid" id="Q8H1D3"/>
<dbReference type="OMA" id="DPANISW"/>
<dbReference type="PhylomeDB" id="Q8H1D3"/>
<dbReference type="UniPathway" id="UPA00143"/>
<dbReference type="PRO" id="PR:Q8H1D3"/>
<dbReference type="Proteomes" id="UP000006548">
    <property type="component" value="Chromosome 4"/>
</dbReference>
<dbReference type="ExpressionAtlas" id="Q8H1D3">
    <property type="expression patterns" value="baseline and differential"/>
</dbReference>
<dbReference type="GO" id="GO:0016324">
    <property type="term" value="C:apical plasma membrane"/>
    <property type="evidence" value="ECO:0000314"/>
    <property type="project" value="UniProtKB"/>
</dbReference>
<dbReference type="GO" id="GO:0071944">
    <property type="term" value="C:cell periphery"/>
    <property type="evidence" value="ECO:0000314"/>
    <property type="project" value="UniProtKB"/>
</dbReference>
<dbReference type="GO" id="GO:0005737">
    <property type="term" value="C:cytoplasm"/>
    <property type="evidence" value="ECO:0000314"/>
    <property type="project" value="UniProtKB"/>
</dbReference>
<dbReference type="GO" id="GO:0005829">
    <property type="term" value="C:cytosol"/>
    <property type="evidence" value="ECO:0000314"/>
    <property type="project" value="UniProtKB"/>
</dbReference>
<dbReference type="GO" id="GO:0005770">
    <property type="term" value="C:late endosome"/>
    <property type="evidence" value="ECO:0000314"/>
    <property type="project" value="TAIR"/>
</dbReference>
<dbReference type="GO" id="GO:0005886">
    <property type="term" value="C:plasma membrane"/>
    <property type="evidence" value="ECO:0000314"/>
    <property type="project" value="UniProtKB"/>
</dbReference>
<dbReference type="GO" id="GO:0045176">
    <property type="term" value="P:apical protein localization"/>
    <property type="evidence" value="ECO:0000316"/>
    <property type="project" value="TAIR"/>
</dbReference>
<dbReference type="GO" id="GO:0010540">
    <property type="term" value="P:basipetal auxin transport"/>
    <property type="evidence" value="ECO:0000316"/>
    <property type="project" value="TAIR"/>
</dbReference>
<dbReference type="GO" id="GO:0071365">
    <property type="term" value="P:cellular response to auxin stimulus"/>
    <property type="evidence" value="ECO:0000270"/>
    <property type="project" value="UniProtKB"/>
</dbReference>
<dbReference type="GO" id="GO:0048825">
    <property type="term" value="P:cotyledon development"/>
    <property type="evidence" value="ECO:0000316"/>
    <property type="project" value="TAIR"/>
</dbReference>
<dbReference type="GO" id="GO:0009908">
    <property type="term" value="P:flower development"/>
    <property type="evidence" value="ECO:0000316"/>
    <property type="project" value="TAIR"/>
</dbReference>
<dbReference type="GO" id="GO:0010229">
    <property type="term" value="P:inflorescence development"/>
    <property type="evidence" value="ECO:0000316"/>
    <property type="project" value="TAIR"/>
</dbReference>
<dbReference type="GO" id="GO:0009958">
    <property type="term" value="P:positive gravitropism"/>
    <property type="evidence" value="ECO:0000316"/>
    <property type="project" value="UniProtKB"/>
</dbReference>
<dbReference type="GO" id="GO:0009911">
    <property type="term" value="P:positive regulation of flower development"/>
    <property type="evidence" value="ECO:0000315"/>
    <property type="project" value="UniProtKB"/>
</dbReference>
<dbReference type="GO" id="GO:1901703">
    <property type="term" value="P:protein localization involved in auxin polar transport"/>
    <property type="evidence" value="ECO:0000315"/>
    <property type="project" value="UniProtKB"/>
</dbReference>
<dbReference type="GO" id="GO:0016567">
    <property type="term" value="P:protein ubiquitination"/>
    <property type="evidence" value="ECO:0007669"/>
    <property type="project" value="UniProtKB-UniPathway"/>
</dbReference>
<dbReference type="GO" id="GO:2000012">
    <property type="term" value="P:regulation of auxin polar transport"/>
    <property type="evidence" value="ECO:0000315"/>
    <property type="project" value="UniProtKB"/>
</dbReference>
<dbReference type="CDD" id="cd18312">
    <property type="entry name" value="BTB_POZ_NPY3-like"/>
    <property type="match status" value="1"/>
</dbReference>
<dbReference type="Gene3D" id="3.30.710.10">
    <property type="entry name" value="Potassium Channel Kv1.1, Chain A"/>
    <property type="match status" value="1"/>
</dbReference>
<dbReference type="InterPro" id="IPR000210">
    <property type="entry name" value="BTB/POZ_dom"/>
</dbReference>
<dbReference type="InterPro" id="IPR043454">
    <property type="entry name" value="NPH3/RPT2-like"/>
</dbReference>
<dbReference type="InterPro" id="IPR027356">
    <property type="entry name" value="NPH3_dom"/>
</dbReference>
<dbReference type="InterPro" id="IPR011333">
    <property type="entry name" value="SKP1/BTB/POZ_sf"/>
</dbReference>
<dbReference type="PANTHER" id="PTHR32370">
    <property type="entry name" value="OS12G0117600 PROTEIN"/>
    <property type="match status" value="1"/>
</dbReference>
<dbReference type="Pfam" id="PF00651">
    <property type="entry name" value="BTB"/>
    <property type="match status" value="1"/>
</dbReference>
<dbReference type="Pfam" id="PF03000">
    <property type="entry name" value="NPH3"/>
    <property type="match status" value="1"/>
</dbReference>
<dbReference type="SMART" id="SM00225">
    <property type="entry name" value="BTB"/>
    <property type="match status" value="1"/>
</dbReference>
<dbReference type="SUPFAM" id="SSF54695">
    <property type="entry name" value="POZ domain"/>
    <property type="match status" value="1"/>
</dbReference>
<dbReference type="PROSITE" id="PS50097">
    <property type="entry name" value="BTB"/>
    <property type="match status" value="1"/>
</dbReference>
<dbReference type="PROSITE" id="PS51649">
    <property type="entry name" value="NPH3"/>
    <property type="match status" value="1"/>
</dbReference>
<gene>
    <name evidence="17 18 19" type="primary">NPY1</name>
    <name evidence="15" type="synonym">ENP</name>
    <name evidence="16 20" type="synonym">MAB4</name>
    <name evidence="24" type="ordered locus">At4g31820</name>
    <name evidence="25" type="ORF">F11C18.20</name>
</gene>
<reference key="1">
    <citation type="journal article" date="1999" name="Nature">
        <title>Sequence and analysis of chromosome 4 of the plant Arabidopsis thaliana.</title>
        <authorList>
            <person name="Mayer K.F.X."/>
            <person name="Schueller C."/>
            <person name="Wambutt R."/>
            <person name="Murphy G."/>
            <person name="Volckaert G."/>
            <person name="Pohl T."/>
            <person name="Duesterhoeft A."/>
            <person name="Stiekema W."/>
            <person name="Entian K.-D."/>
            <person name="Terryn N."/>
            <person name="Harris B."/>
            <person name="Ansorge W."/>
            <person name="Brandt P."/>
            <person name="Grivell L.A."/>
            <person name="Rieger M."/>
            <person name="Weichselgartner M."/>
            <person name="de Simone V."/>
            <person name="Obermaier B."/>
            <person name="Mache R."/>
            <person name="Mueller M."/>
            <person name="Kreis M."/>
            <person name="Delseny M."/>
            <person name="Puigdomenech P."/>
            <person name="Watson M."/>
            <person name="Schmidtheini T."/>
            <person name="Reichert B."/>
            <person name="Portetelle D."/>
            <person name="Perez-Alonso M."/>
            <person name="Boutry M."/>
            <person name="Bancroft I."/>
            <person name="Vos P."/>
            <person name="Hoheisel J."/>
            <person name="Zimmermann W."/>
            <person name="Wedler H."/>
            <person name="Ridley P."/>
            <person name="Langham S.-A."/>
            <person name="McCullagh B."/>
            <person name="Bilham L."/>
            <person name="Robben J."/>
            <person name="van der Schueren J."/>
            <person name="Grymonprez B."/>
            <person name="Chuang Y.-J."/>
            <person name="Vandenbussche F."/>
            <person name="Braeken M."/>
            <person name="Weltjens I."/>
            <person name="Voet M."/>
            <person name="Bastiaens I."/>
            <person name="Aert R."/>
            <person name="Defoor E."/>
            <person name="Weitzenegger T."/>
            <person name="Bothe G."/>
            <person name="Ramsperger U."/>
            <person name="Hilbert H."/>
            <person name="Braun M."/>
            <person name="Holzer E."/>
            <person name="Brandt A."/>
            <person name="Peters S."/>
            <person name="van Staveren M."/>
            <person name="Dirkse W."/>
            <person name="Mooijman P."/>
            <person name="Klein Lankhorst R."/>
            <person name="Rose M."/>
            <person name="Hauf J."/>
            <person name="Koetter P."/>
            <person name="Berneiser S."/>
            <person name="Hempel S."/>
            <person name="Feldpausch M."/>
            <person name="Lamberth S."/>
            <person name="Van den Daele H."/>
            <person name="De Keyser A."/>
            <person name="Buysshaert C."/>
            <person name="Gielen J."/>
            <person name="Villarroel R."/>
            <person name="De Clercq R."/>
            <person name="van Montagu M."/>
            <person name="Rogers J."/>
            <person name="Cronin A."/>
            <person name="Quail M.A."/>
            <person name="Bray-Allen S."/>
            <person name="Clark L."/>
            <person name="Doggett J."/>
            <person name="Hall S."/>
            <person name="Kay M."/>
            <person name="Lennard N."/>
            <person name="McLay K."/>
            <person name="Mayes R."/>
            <person name="Pettett A."/>
            <person name="Rajandream M.A."/>
            <person name="Lyne M."/>
            <person name="Benes V."/>
            <person name="Rechmann S."/>
            <person name="Borkova D."/>
            <person name="Bloecker H."/>
            <person name="Scharfe M."/>
            <person name="Grimm M."/>
            <person name="Loehnert T.-H."/>
            <person name="Dose S."/>
            <person name="de Haan M."/>
            <person name="Maarse A.C."/>
            <person name="Schaefer M."/>
            <person name="Mueller-Auer S."/>
            <person name="Gabel C."/>
            <person name="Fuchs M."/>
            <person name="Fartmann B."/>
            <person name="Granderath K."/>
            <person name="Dauner D."/>
            <person name="Herzl A."/>
            <person name="Neumann S."/>
            <person name="Argiriou A."/>
            <person name="Vitale D."/>
            <person name="Liguori R."/>
            <person name="Piravandi E."/>
            <person name="Massenet O."/>
            <person name="Quigley F."/>
            <person name="Clabauld G."/>
            <person name="Muendlein A."/>
            <person name="Felber R."/>
            <person name="Schnabl S."/>
            <person name="Hiller R."/>
            <person name="Schmidt W."/>
            <person name="Lecharny A."/>
            <person name="Aubourg S."/>
            <person name="Chefdor F."/>
            <person name="Cooke R."/>
            <person name="Berger C."/>
            <person name="Monfort A."/>
            <person name="Casacuberta E."/>
            <person name="Gibbons T."/>
            <person name="Weber N."/>
            <person name="Vandenbol M."/>
            <person name="Bargues M."/>
            <person name="Terol J."/>
            <person name="Torres A."/>
            <person name="Perez-Perez A."/>
            <person name="Purnelle B."/>
            <person name="Bent E."/>
            <person name="Johnson S."/>
            <person name="Tacon D."/>
            <person name="Jesse T."/>
            <person name="Heijnen L."/>
            <person name="Schwarz S."/>
            <person name="Scholler P."/>
            <person name="Heber S."/>
            <person name="Francs P."/>
            <person name="Bielke C."/>
            <person name="Frishman D."/>
            <person name="Haase D."/>
            <person name="Lemcke K."/>
            <person name="Mewes H.-W."/>
            <person name="Stocker S."/>
            <person name="Zaccaria P."/>
            <person name="Bevan M."/>
            <person name="Wilson R.K."/>
            <person name="de la Bastide M."/>
            <person name="Habermann K."/>
            <person name="Parnell L."/>
            <person name="Dedhia N."/>
            <person name="Gnoj L."/>
            <person name="Schutz K."/>
            <person name="Huang E."/>
            <person name="Spiegel L."/>
            <person name="Sekhon M."/>
            <person name="Murray J."/>
            <person name="Sheet P."/>
            <person name="Cordes M."/>
            <person name="Abu-Threideh J."/>
            <person name="Stoneking T."/>
            <person name="Kalicki J."/>
            <person name="Graves T."/>
            <person name="Harmon G."/>
            <person name="Edwards J."/>
            <person name="Latreille P."/>
            <person name="Courtney L."/>
            <person name="Cloud J."/>
            <person name="Abbott A."/>
            <person name="Scott K."/>
            <person name="Johnson D."/>
            <person name="Minx P."/>
            <person name="Bentley D."/>
            <person name="Fulton B."/>
            <person name="Miller N."/>
            <person name="Greco T."/>
            <person name="Kemp K."/>
            <person name="Kramer J."/>
            <person name="Fulton L."/>
            <person name="Mardis E."/>
            <person name="Dante M."/>
            <person name="Pepin K."/>
            <person name="Hillier L.W."/>
            <person name="Nelson J."/>
            <person name="Spieth J."/>
            <person name="Ryan E."/>
            <person name="Andrews S."/>
            <person name="Geisel C."/>
            <person name="Layman D."/>
            <person name="Du H."/>
            <person name="Ali J."/>
            <person name="Berghoff A."/>
            <person name="Jones K."/>
            <person name="Drone K."/>
            <person name="Cotton M."/>
            <person name="Joshu C."/>
            <person name="Antonoiu B."/>
            <person name="Zidanic M."/>
            <person name="Strong C."/>
            <person name="Sun H."/>
            <person name="Lamar B."/>
            <person name="Yordan C."/>
            <person name="Ma P."/>
            <person name="Zhong J."/>
            <person name="Preston R."/>
            <person name="Vil D."/>
            <person name="Shekher M."/>
            <person name="Matero A."/>
            <person name="Shah R."/>
            <person name="Swaby I.K."/>
            <person name="O'Shaughnessy A."/>
            <person name="Rodriguez M."/>
            <person name="Hoffman J."/>
            <person name="Till S."/>
            <person name="Granat S."/>
            <person name="Shohdy N."/>
            <person name="Hasegawa A."/>
            <person name="Hameed A."/>
            <person name="Lodhi M."/>
            <person name="Johnson A."/>
            <person name="Chen E."/>
            <person name="Marra M.A."/>
            <person name="Martienssen R."/>
            <person name="McCombie W.R."/>
        </authorList>
    </citation>
    <scope>NUCLEOTIDE SEQUENCE [LARGE SCALE GENOMIC DNA]</scope>
    <source>
        <strain>cv. Columbia</strain>
    </source>
</reference>
<reference key="2">
    <citation type="journal article" date="2017" name="Plant J.">
        <title>Araport11: a complete reannotation of the Arabidopsis thaliana reference genome.</title>
        <authorList>
            <person name="Cheng C.Y."/>
            <person name="Krishnakumar V."/>
            <person name="Chan A.P."/>
            <person name="Thibaud-Nissen F."/>
            <person name="Schobel S."/>
            <person name="Town C.D."/>
        </authorList>
    </citation>
    <scope>GENOME REANNOTATION</scope>
    <source>
        <strain>cv. Columbia</strain>
    </source>
</reference>
<reference key="3">
    <citation type="journal article" date="2003" name="Science">
        <title>Empirical analysis of transcriptional activity in the Arabidopsis genome.</title>
        <authorList>
            <person name="Yamada K."/>
            <person name="Lim J."/>
            <person name="Dale J.M."/>
            <person name="Chen H."/>
            <person name="Shinn P."/>
            <person name="Palm C.J."/>
            <person name="Southwick A.M."/>
            <person name="Wu H.C."/>
            <person name="Kim C.J."/>
            <person name="Nguyen M."/>
            <person name="Pham P.K."/>
            <person name="Cheuk R.F."/>
            <person name="Karlin-Newmann G."/>
            <person name="Liu S.X."/>
            <person name="Lam B."/>
            <person name="Sakano H."/>
            <person name="Wu T."/>
            <person name="Yu G."/>
            <person name="Miranda M."/>
            <person name="Quach H.L."/>
            <person name="Tripp M."/>
            <person name="Chang C.H."/>
            <person name="Lee J.M."/>
            <person name="Toriumi M.J."/>
            <person name="Chan M.M."/>
            <person name="Tang C.C."/>
            <person name="Onodera C.S."/>
            <person name="Deng J.M."/>
            <person name="Akiyama K."/>
            <person name="Ansari Y."/>
            <person name="Arakawa T."/>
            <person name="Banh J."/>
            <person name="Banno F."/>
            <person name="Bowser L."/>
            <person name="Brooks S.Y."/>
            <person name="Carninci P."/>
            <person name="Chao Q."/>
            <person name="Choy N."/>
            <person name="Enju A."/>
            <person name="Goldsmith A.D."/>
            <person name="Gurjal M."/>
            <person name="Hansen N.F."/>
            <person name="Hayashizaki Y."/>
            <person name="Johnson-Hopson C."/>
            <person name="Hsuan V.W."/>
            <person name="Iida K."/>
            <person name="Karnes M."/>
            <person name="Khan S."/>
            <person name="Koesema E."/>
            <person name="Ishida J."/>
            <person name="Jiang P.X."/>
            <person name="Jones T."/>
            <person name="Kawai J."/>
            <person name="Kamiya A."/>
            <person name="Meyers C."/>
            <person name="Nakajima M."/>
            <person name="Narusaka M."/>
            <person name="Seki M."/>
            <person name="Sakurai T."/>
            <person name="Satou M."/>
            <person name="Tamse R."/>
            <person name="Vaysberg M."/>
            <person name="Wallender E.K."/>
            <person name="Wong C."/>
            <person name="Yamamura Y."/>
            <person name="Yuan S."/>
            <person name="Shinozaki K."/>
            <person name="Davis R.W."/>
            <person name="Theologis A."/>
            <person name="Ecker J.R."/>
        </authorList>
    </citation>
    <scope>NUCLEOTIDE SEQUENCE [LARGE SCALE MRNA]</scope>
    <source>
        <strain>cv. Columbia</strain>
    </source>
</reference>
<reference key="4">
    <citation type="journal article" date="2005" name="Development">
        <title>The gene ENHANCER OF PINOID controls cotyledon development in the Arabidopsis embryo.</title>
        <authorList>
            <person name="Treml B.S."/>
            <person name="Winderl S."/>
            <person name="Radykewicz R."/>
            <person name="Herz M."/>
            <person name="Schweizer G."/>
            <person name="Hutzler P."/>
            <person name="Glawischnig E."/>
            <person name="Ruiz R.A."/>
        </authorList>
    </citation>
    <scope>FUNCTION</scope>
</reference>
<reference key="5">
    <citation type="journal article" date="2005" name="J. Biol. Chem.">
        <title>Cullins 3a and 3b assemble with members of the broad complex/tramtrack/bric-a-brac (BTB) protein family to form essential ubiquitin-protein ligases (E3s) in Arabidopsis.</title>
        <authorList>
            <person name="Gingerich D.J."/>
            <person name="Gagne J.M."/>
            <person name="Salter D.W."/>
            <person name="Hellmann H."/>
            <person name="Estelle M."/>
            <person name="Ma L."/>
            <person name="Vierstra R.D."/>
        </authorList>
    </citation>
    <scope>DOMAIN BTB</scope>
</reference>
<reference key="6">
    <citation type="journal article" date="2007" name="Development">
        <title>The gene MACCHI-BOU 4/ENHANCER OF PINOID encodes a NPH3-like protein and reveals similarities between organogenesis and phototropism at the molecular level.</title>
        <authorList>
            <person name="Furutani M."/>
            <person name="Kajiwara T."/>
            <person name="Kato T."/>
            <person name="Treml B.S."/>
            <person name="Stockum C."/>
            <person name="Torres-Ruiz R.A."/>
            <person name="Tasaka M."/>
        </authorList>
    </citation>
    <scope>FUNCTION</scope>
    <scope>DEVELOPMENTAL STAGE</scope>
    <scope>SUBCELLULAR LOCATION</scope>
</reference>
<reference key="7">
    <citation type="journal article" date="2007" name="Proc. Natl. Acad. Sci. U.S.A.">
        <title>NPY1, a BTB-NPH3-like protein, plays a critical role in auxin-regulated organogenesis in Arabidopsis.</title>
        <authorList>
            <person name="Cheng Y."/>
            <person name="Qin G."/>
            <person name="Dai X."/>
            <person name="Zhao Y."/>
        </authorList>
    </citation>
    <scope>FUNCTION</scope>
    <scope>DEVELOPMENTAL STAGE</scope>
    <scope>DISRUPTION PHENOTYPE</scope>
</reference>
<reference key="8">
    <citation type="journal article" date="2008" name="Proc. Natl. Acad. Sci. U.S.A.">
        <title>NPY genes and AGC kinases define two key steps in auxin-mediated organogenesis in Arabidopsis.</title>
        <authorList>
            <person name="Cheng Y."/>
            <person name="Qin G."/>
            <person name="Dai X."/>
            <person name="Zhao Y."/>
        </authorList>
    </citation>
    <scope>FUNCTION</scope>
    <scope>TISSUE SPECIFICITY</scope>
    <scope>GENE FAMILY</scope>
    <scope>NOMENCLATURE</scope>
</reference>
<reference key="9">
    <citation type="journal article" date="2011" name="Development">
        <title>Polar-localized NPH3-like proteins regulate polarity and endocytosis of PIN-FORMED auxin efflux carriers.</title>
        <authorList>
            <person name="Furutani M."/>
            <person name="Sakamoto N."/>
            <person name="Yoshida S."/>
            <person name="Kajiwara T."/>
            <person name="Robert H.S."/>
            <person name="Friml J."/>
            <person name="Tasaka M."/>
        </authorList>
    </citation>
    <scope>FUNCTION</scope>
    <scope>DISRUPTION PHENOTYPE</scope>
    <scope>SUBCELLULAR LOCATION</scope>
    <scope>TISSUE SPECIFICITY</scope>
    <scope>DEVELOPMENTAL STAGE</scope>
    <scope>GENE FAMILY</scope>
    <source>
        <strain>cv. Columbia</strain>
    </source>
</reference>
<reference key="10">
    <citation type="journal article" date="2011" name="Mol. Plant">
        <title>NPY genes play an essential role in root gravitropic responses in Arabidopsis.</title>
        <authorList>
            <person name="Li Y."/>
            <person name="Dai X."/>
            <person name="Cheng Y."/>
            <person name="Zhao Y."/>
        </authorList>
    </citation>
    <scope>FUNCTION</scope>
    <scope>TISSUE SPECIFICITY</scope>
    <scope>GENE FAMILY</scope>
    <scope>NOMENCLATURE</scope>
</reference>
<reference key="11">
    <citation type="journal article" date="2014" name="Proc. Natl. Acad. Sci. U.S.A.">
        <title>MAB4-induced auxin sink generates local auxin gradients in Arabidopsis organ formation.</title>
        <authorList>
            <person name="Furutani M."/>
            <person name="Nakano Y."/>
            <person name="Tasaka M."/>
        </authorList>
    </citation>
    <scope>FUNCTION</scope>
    <scope>DISRUPTION PHENOTYPE</scope>
    <scope>INDUCTION BY AUXIN</scope>
    <scope>TISSUE SPECIFICITY</scope>
    <scope>DEVELOPMENTAL STAGE</scope>
    <source>
        <strain>cv. Columbia</strain>
    </source>
</reference>
<reference key="12">
    <citation type="journal article" date="2021" name="Curr. Biol.">
        <title>AGC kinases and MAB4/MEL proteins maintain PIN polarity by limiting lateral diffusion in plant cells.</title>
        <authorList>
            <person name="Glanc M."/>
            <person name="Van Gelderen K."/>
            <person name="Hoermayer L."/>
            <person name="Tan S."/>
            <person name="Naramoto S."/>
            <person name="Zhang X."/>
            <person name="Domjan D."/>
            <person name="Vcelarova L."/>
            <person name="Hauschild R."/>
            <person name="Johnson A."/>
            <person name="de Koning E."/>
            <person name="van Dop M."/>
            <person name="Rademacher E."/>
            <person name="Janson S."/>
            <person name="Wei X."/>
            <person name="Molnar G."/>
            <person name="Fendrych M."/>
            <person name="De Rybel B."/>
            <person name="Offringa R."/>
            <person name="Friml J."/>
        </authorList>
    </citation>
    <scope>FUNCTION</scope>
    <scope>SUBUNIT</scope>
    <scope>INTERACTION WITH PIN2</scope>
    <scope>SUBCELLULAR LOCATION</scope>
    <source>
        <strain>cv. Columbia</strain>
    </source>
</reference>
<organism>
    <name type="scientific">Arabidopsis thaliana</name>
    <name type="common">Mouse-ear cress</name>
    <dbReference type="NCBI Taxonomy" id="3702"/>
    <lineage>
        <taxon>Eukaryota</taxon>
        <taxon>Viridiplantae</taxon>
        <taxon>Streptophyta</taxon>
        <taxon>Embryophyta</taxon>
        <taxon>Tracheophyta</taxon>
        <taxon>Spermatophyta</taxon>
        <taxon>Magnoliopsida</taxon>
        <taxon>eudicotyledons</taxon>
        <taxon>Gunneridae</taxon>
        <taxon>Pentapetalae</taxon>
        <taxon>rosids</taxon>
        <taxon>malvids</taxon>
        <taxon>Brassicales</taxon>
        <taxon>Brassicaceae</taxon>
        <taxon>Camelineae</taxon>
        <taxon>Arabidopsis</taxon>
    </lineage>
</organism>
<comment type="function">
    <text evidence="1 7 8 9 10 11 12 13 14">May act as a substrate-specific adapter of an E3 ubiquitin-protein ligase complex (CUL3-RBX1-BTB) which mediates the ubiquitination and subsequent proteasomal degradation of target proteins (By similarity). Coregulates with PID the auxin-mediated plant organogenesis (PubMed:18000043, PubMed:21490067). Regulates basipetal PIN proteins (e.g. PIN1) polarization to establish inward auxin transport from the L1 surface of incipient organ primordia; this process is essential for the progression of flower organs development (PubMed:16107478, PubMed:21490067, PubMed:24395791). Recruited to the plasma membrane by PINs (e.g. PIN1 and PIN2) and, in concert with AGC kinases-mediated (e.g. D6PK and PID) PINs phosphorylation, maintains their cell polarity (apical or basal) through limiting lateral diffusion-based escape (PubMed:33705718). Induces auxin response in inner cell layers through a shift in PIN1 localization (PubMed:24395791). Influences cotyledon development by regulating auxin distribution mainly in the protodermal cell layer (PubMed:16107478, PubMed:21490067). May play an essential role in root gravitropic responses (PubMed:17913786, PubMed:19075219, PubMed:20833732, PubMed:21490067).</text>
</comment>
<comment type="pathway">
    <text evidence="1">Protein modification; protein ubiquitination.</text>
</comment>
<comment type="subunit">
    <text evidence="14">Component of a complex made of PINs (e.g. PIN1 and PIN2), MAB4/MELs (e.g. NPY1/MAB4 and NPY5/MEL1) and AGC kinases (e.g. D6PK and PID) at the plasma membrane (PubMed:33705718). Binds directly to PIN2 and PID (PubMed:33705718).</text>
</comment>
<comment type="subcellular location">
    <subcellularLocation>
        <location evidence="8">Late endosome</location>
    </subcellularLocation>
    <subcellularLocation>
        <location evidence="12 14">Cell membrane</location>
    </subcellularLocation>
    <subcellularLocation>
        <location evidence="12 14">Cytoplasm</location>
        <location evidence="12 14">Cytosol</location>
    </subcellularLocation>
    <text evidence="8 12">Colocalized with PID (PubMed:17913786). PIN1- and PIN2-dependent polar localization at the cell periphery almost identical to PIN proteins polarity, starting in protodermal cells at the early heart stage and later converging to the tips of cotyledon primordia; this localization is enhanced by PID (PubMed:21490067).</text>
</comment>
<comment type="tissue specificity">
    <text evidence="10 11 12 13">Accumulates in organ primordia such as cotyledons, leaves and floral organs (PubMed:21490067). Expressed mainly in the apical regions of embryos including cotyledon tips and the apical meristem (PubMed:19075219, PubMed:20833732). Induced by the transcription factor ARF5/MP at the periphery of inflorescence meristems (PubMed:24395791). Highly expressed in primary root tips and radicles (PubMed:19075219, PubMed:20833732, PubMed:21490067).</text>
</comment>
<comment type="developmental stage">
    <text evidence="8 9 12 13">Accumulates in active proliferating organs (PubMed:21490067). Detected in globular-stage embryos in the epidermis with the highest concentration at the apical region (PubMed:17913786, PubMed:18000043). At early heart stage, expression is restricted to the two cotyledon primordia and the meristem (PubMed:17913786, PubMed:18000043). In the late heart to torpedo stages, expression is restricted to the meristem and the cotyledon tips (PubMed:17913786, PubMed:18000043). In mature embryos, stricly expressed at the apical meristem (PubMed:17913786, PubMed:18000043). During seedling development, highly expressed in young leaf primordia and the apical meristems (PubMed:17913786, PubMed:18000043). Detected in the protodermal cell layer of the embryo and the meristem L1 layer at the site of organ initiation (PubMed:17913786, PubMed:18000043). After transition to the reproductive phase, detected in the inflorescence meristem and at various stages of floral development (PubMed:17913786, PubMed:18000043). In inflorescences, present at the initiation site of organ primordia with strong levels in the L1 layer and weak levels in inner cell layers (PubMed:24395791).</text>
</comment>
<comment type="induction">
    <text evidence="13">Induced, in an ARF5/MP-dependent manner, in the shoot apical meristem (SAM) after auxin treatment of the shoot apex.</text>
</comment>
<comment type="domain">
    <text evidence="6">The BTB/POZ domain mediates the interaction with some component of ubiquitin ligase complexes.</text>
</comment>
<comment type="disruption phenotype">
    <text evidence="9 12 13">Seedlings with abnormal cotyledons and flowers (PubMed:18000043, PubMed:24395791). Reduced PIN1 levels in the plasma membrane of embryos from the heart stage specifically in the protodermal cell layer of cotyledon primordia (PubMed:21490067). Lost basipetal PIN1 polarization, resulting in abnormal auxin accumulation all over the meristem surface as a result of the lack of an auxin sink (PubMed:24395791). Plants missing NPY1/MAB4 and NPY3/MEL2 form pin-like inflorescences with several leaves and fertile flowers (PubMed:24395791). Plants missing NPY1/MAB4 and NPY5/MEL1 form pin-like inflorescences with several leaves and sterile flowers (PubMed:24395791). Triple mutants missing NPY1/MAB4, NPY3/MEL2 and NPY5/MEL1 are sterile and have altered PIN1 localization in organs primordia (e.g. cotyledon and floral meristem) at the plasma membrane of not only protodermal cell layer but also in provascular tissues; this phenotype is associated with missing expression of auxin responsive genes in the apical region of the embryo and in inflorescences (PubMed:21490067, PubMed:24395791).</text>
</comment>
<comment type="similarity">
    <text evidence="4">Belongs to the NPH3 family.</text>
</comment>
<comment type="sequence caution" evidence="21">
    <conflict type="erroneous gene model prediction">
        <sequence resource="EMBL-CDS" id="ANM66057"/>
    </conflict>
</comment>
<comment type="sequence caution" evidence="21">
    <conflict type="erroneous gene model prediction">
        <sequence resource="EMBL-CDS" id="CAB40752"/>
    </conflict>
</comment>
<comment type="sequence caution" evidence="21">
    <conflict type="erroneous gene model prediction">
        <sequence resource="EMBL-CDS" id="CAB79900"/>
    </conflict>
</comment>
<name>NPY1_ARATH</name>
<proteinExistence type="evidence at protein level"/>
<feature type="chain" id="PRO_0000409563" description="Phototropic-responsive NPH3 family protein NPY1">
    <location>
        <begin position="1"/>
        <end position="571"/>
    </location>
</feature>
<feature type="domain" description="BTB" evidence="3">
    <location>
        <begin position="29"/>
        <end position="97"/>
    </location>
</feature>
<feature type="domain" description="NPH3" evidence="4">
    <location>
        <begin position="210"/>
        <end position="468"/>
    </location>
</feature>
<feature type="region of interest" description="Disordered" evidence="5">
    <location>
        <begin position="475"/>
        <end position="571"/>
    </location>
</feature>
<feature type="compositionally biased region" description="Basic and acidic residues" evidence="5">
    <location>
        <begin position="484"/>
        <end position="504"/>
    </location>
</feature>
<feature type="compositionally biased region" description="Low complexity" evidence="5">
    <location>
        <begin position="540"/>
        <end position="562"/>
    </location>
</feature>
<feature type="modified residue" description="Phosphotyrosine" evidence="2">
    <location>
        <position position="409"/>
    </location>
</feature>
<feature type="sequence conflict" description="In Ref. 3; AAM13843." evidence="21" ref="3">
    <original>R</original>
    <variation>G</variation>
    <location>
        <position position="226"/>
    </location>
</feature>
<accession>Q8H1D3</accession>
<accession>A0A1P8B383</accession>
<accession>Q8RWY9</accession>
<accession>Q9SZ49</accession>